<accession>Q99K99</accession>
<accession>Q8BQG8</accession>
<accession>Q9DCE0</accession>
<name>PGKA1_MOUSE</name>
<evidence type="ECO:0000250" key="1">
    <source>
        <dbReference type="UniProtKB" id="Q8IY42"/>
    </source>
</evidence>
<evidence type="ECO:0000256" key="2">
    <source>
        <dbReference type="SAM" id="MobiDB-lite"/>
    </source>
</evidence>
<evidence type="ECO:0000305" key="3"/>
<evidence type="ECO:0000312" key="4">
    <source>
        <dbReference type="MGI" id="MGI:1923511"/>
    </source>
</evidence>
<evidence type="ECO:0007744" key="5">
    <source>
    </source>
</evidence>
<evidence type="ECO:0007744" key="6">
    <source>
    </source>
</evidence>
<protein>
    <recommendedName>
        <fullName>PDCD10 and GCKIII kinases-associated protein 1</fullName>
    </recommendedName>
</protein>
<organism>
    <name type="scientific">Mus musculus</name>
    <name type="common">Mouse</name>
    <dbReference type="NCBI Taxonomy" id="10090"/>
    <lineage>
        <taxon>Eukaryota</taxon>
        <taxon>Metazoa</taxon>
        <taxon>Chordata</taxon>
        <taxon>Craniata</taxon>
        <taxon>Vertebrata</taxon>
        <taxon>Euteleostomi</taxon>
        <taxon>Mammalia</taxon>
        <taxon>Eutheria</taxon>
        <taxon>Euarchontoglires</taxon>
        <taxon>Glires</taxon>
        <taxon>Rodentia</taxon>
        <taxon>Myomorpha</taxon>
        <taxon>Muroidea</taxon>
        <taxon>Muridae</taxon>
        <taxon>Murinae</taxon>
        <taxon>Mus</taxon>
        <taxon>Mus</taxon>
    </lineage>
</organism>
<comment type="function">
    <text evidence="1">Acts as a tumor suppressor. Acts as a tumor suppressor for colorectal cancer cell proliferation by targeting KEAP1/USP17/ELK1/CDK6 axis.</text>
</comment>
<comment type="subunit">
    <text evidence="1">Interacts with KEAP1; this interaction prevents the ubiquitination of KEAP1 by TRIM25, thus protecting KEAP1 from degradation. Found in association with PDCD10 and members of the STE20 kinases, such as STK24, STK25 and STK26.</text>
</comment>
<comment type="subcellular location">
    <subcellularLocation>
        <location evidence="1">Cell membrane</location>
        <topology evidence="1">Peripheral membrane protein</topology>
    </subcellularLocation>
</comment>
<reference key="1">
    <citation type="journal article" date="2005" name="Science">
        <title>The transcriptional landscape of the mammalian genome.</title>
        <authorList>
            <person name="Carninci P."/>
            <person name="Kasukawa T."/>
            <person name="Katayama S."/>
            <person name="Gough J."/>
            <person name="Frith M.C."/>
            <person name="Maeda N."/>
            <person name="Oyama R."/>
            <person name="Ravasi T."/>
            <person name="Lenhard B."/>
            <person name="Wells C."/>
            <person name="Kodzius R."/>
            <person name="Shimokawa K."/>
            <person name="Bajic V.B."/>
            <person name="Brenner S.E."/>
            <person name="Batalov S."/>
            <person name="Forrest A.R."/>
            <person name="Zavolan M."/>
            <person name="Davis M.J."/>
            <person name="Wilming L.G."/>
            <person name="Aidinis V."/>
            <person name="Allen J.E."/>
            <person name="Ambesi-Impiombato A."/>
            <person name="Apweiler R."/>
            <person name="Aturaliya R.N."/>
            <person name="Bailey T.L."/>
            <person name="Bansal M."/>
            <person name="Baxter L."/>
            <person name="Beisel K.W."/>
            <person name="Bersano T."/>
            <person name="Bono H."/>
            <person name="Chalk A.M."/>
            <person name="Chiu K.P."/>
            <person name="Choudhary V."/>
            <person name="Christoffels A."/>
            <person name="Clutterbuck D.R."/>
            <person name="Crowe M.L."/>
            <person name="Dalla E."/>
            <person name="Dalrymple B.P."/>
            <person name="de Bono B."/>
            <person name="Della Gatta G."/>
            <person name="di Bernardo D."/>
            <person name="Down T."/>
            <person name="Engstrom P."/>
            <person name="Fagiolini M."/>
            <person name="Faulkner G."/>
            <person name="Fletcher C.F."/>
            <person name="Fukushima T."/>
            <person name="Furuno M."/>
            <person name="Futaki S."/>
            <person name="Gariboldi M."/>
            <person name="Georgii-Hemming P."/>
            <person name="Gingeras T.R."/>
            <person name="Gojobori T."/>
            <person name="Green R.E."/>
            <person name="Gustincich S."/>
            <person name="Harbers M."/>
            <person name="Hayashi Y."/>
            <person name="Hensch T.K."/>
            <person name="Hirokawa N."/>
            <person name="Hill D."/>
            <person name="Huminiecki L."/>
            <person name="Iacono M."/>
            <person name="Ikeo K."/>
            <person name="Iwama A."/>
            <person name="Ishikawa T."/>
            <person name="Jakt M."/>
            <person name="Kanapin A."/>
            <person name="Katoh M."/>
            <person name="Kawasawa Y."/>
            <person name="Kelso J."/>
            <person name="Kitamura H."/>
            <person name="Kitano H."/>
            <person name="Kollias G."/>
            <person name="Krishnan S.P."/>
            <person name="Kruger A."/>
            <person name="Kummerfeld S.K."/>
            <person name="Kurochkin I.V."/>
            <person name="Lareau L.F."/>
            <person name="Lazarevic D."/>
            <person name="Lipovich L."/>
            <person name="Liu J."/>
            <person name="Liuni S."/>
            <person name="McWilliam S."/>
            <person name="Madan Babu M."/>
            <person name="Madera M."/>
            <person name="Marchionni L."/>
            <person name="Matsuda H."/>
            <person name="Matsuzawa S."/>
            <person name="Miki H."/>
            <person name="Mignone F."/>
            <person name="Miyake S."/>
            <person name="Morris K."/>
            <person name="Mottagui-Tabar S."/>
            <person name="Mulder N."/>
            <person name="Nakano N."/>
            <person name="Nakauchi H."/>
            <person name="Ng P."/>
            <person name="Nilsson R."/>
            <person name="Nishiguchi S."/>
            <person name="Nishikawa S."/>
            <person name="Nori F."/>
            <person name="Ohara O."/>
            <person name="Okazaki Y."/>
            <person name="Orlando V."/>
            <person name="Pang K.C."/>
            <person name="Pavan W.J."/>
            <person name="Pavesi G."/>
            <person name="Pesole G."/>
            <person name="Petrovsky N."/>
            <person name="Piazza S."/>
            <person name="Reed J."/>
            <person name="Reid J.F."/>
            <person name="Ring B.Z."/>
            <person name="Ringwald M."/>
            <person name="Rost B."/>
            <person name="Ruan Y."/>
            <person name="Salzberg S.L."/>
            <person name="Sandelin A."/>
            <person name="Schneider C."/>
            <person name="Schoenbach C."/>
            <person name="Sekiguchi K."/>
            <person name="Semple C.A."/>
            <person name="Seno S."/>
            <person name="Sessa L."/>
            <person name="Sheng Y."/>
            <person name="Shibata Y."/>
            <person name="Shimada H."/>
            <person name="Shimada K."/>
            <person name="Silva D."/>
            <person name="Sinclair B."/>
            <person name="Sperling S."/>
            <person name="Stupka E."/>
            <person name="Sugiura K."/>
            <person name="Sultana R."/>
            <person name="Takenaka Y."/>
            <person name="Taki K."/>
            <person name="Tammoja K."/>
            <person name="Tan S.L."/>
            <person name="Tang S."/>
            <person name="Taylor M.S."/>
            <person name="Tegner J."/>
            <person name="Teichmann S.A."/>
            <person name="Ueda H.R."/>
            <person name="van Nimwegen E."/>
            <person name="Verardo R."/>
            <person name="Wei C.L."/>
            <person name="Yagi K."/>
            <person name="Yamanishi H."/>
            <person name="Zabarovsky E."/>
            <person name="Zhu S."/>
            <person name="Zimmer A."/>
            <person name="Hide W."/>
            <person name="Bult C."/>
            <person name="Grimmond S.M."/>
            <person name="Teasdale R.D."/>
            <person name="Liu E.T."/>
            <person name="Brusic V."/>
            <person name="Quackenbush J."/>
            <person name="Wahlestedt C."/>
            <person name="Mattick J.S."/>
            <person name="Hume D.A."/>
            <person name="Kai C."/>
            <person name="Sasaki D."/>
            <person name="Tomaru Y."/>
            <person name="Fukuda S."/>
            <person name="Kanamori-Katayama M."/>
            <person name="Suzuki M."/>
            <person name="Aoki J."/>
            <person name="Arakawa T."/>
            <person name="Iida J."/>
            <person name="Imamura K."/>
            <person name="Itoh M."/>
            <person name="Kato T."/>
            <person name="Kawaji H."/>
            <person name="Kawagashira N."/>
            <person name="Kawashima T."/>
            <person name="Kojima M."/>
            <person name="Kondo S."/>
            <person name="Konno H."/>
            <person name="Nakano K."/>
            <person name="Ninomiya N."/>
            <person name="Nishio T."/>
            <person name="Okada M."/>
            <person name="Plessy C."/>
            <person name="Shibata K."/>
            <person name="Shiraki T."/>
            <person name="Suzuki S."/>
            <person name="Tagami M."/>
            <person name="Waki K."/>
            <person name="Watahiki A."/>
            <person name="Okamura-Oho Y."/>
            <person name="Suzuki H."/>
            <person name="Kawai J."/>
            <person name="Hayashizaki Y."/>
        </authorList>
    </citation>
    <scope>NUCLEOTIDE SEQUENCE [LARGE SCALE MRNA]</scope>
    <source>
        <strain>C57BL/6J</strain>
        <tissue>Kidney</tissue>
    </source>
</reference>
<reference key="2">
    <citation type="journal article" date="2004" name="Genome Res.">
        <title>The status, quality, and expansion of the NIH full-length cDNA project: the Mammalian Gene Collection (MGC).</title>
        <authorList>
            <consortium name="The MGC Project Team"/>
        </authorList>
    </citation>
    <scope>NUCLEOTIDE SEQUENCE [LARGE SCALE MRNA]</scope>
    <source>
        <strain>Czech II</strain>
        <tissue>Mammary tumor</tissue>
    </source>
</reference>
<reference key="3">
    <citation type="journal article" date="2007" name="Proc. Natl. Acad. Sci. U.S.A.">
        <title>Large-scale phosphorylation analysis of mouse liver.</title>
        <authorList>
            <person name="Villen J."/>
            <person name="Beausoleil S.A."/>
            <person name="Gerber S.A."/>
            <person name="Gygi S.P."/>
        </authorList>
    </citation>
    <scope>PHOSPHORYLATION [LARGE SCALE ANALYSIS] AT THR-104 AND SER-107</scope>
    <scope>IDENTIFICATION BY MASS SPECTROMETRY [LARGE SCALE ANALYSIS]</scope>
    <source>
        <tissue>Liver</tissue>
    </source>
</reference>
<reference key="4">
    <citation type="journal article" date="2010" name="Cell">
        <title>A tissue-specific atlas of mouse protein phosphorylation and expression.</title>
        <authorList>
            <person name="Huttlin E.L."/>
            <person name="Jedrychowski M.P."/>
            <person name="Elias J.E."/>
            <person name="Goswami T."/>
            <person name="Rad R."/>
            <person name="Beausoleil S.A."/>
            <person name="Villen J."/>
            <person name="Haas W."/>
            <person name="Sowa M.E."/>
            <person name="Gygi S.P."/>
        </authorList>
    </citation>
    <scope>PHOSPHORYLATION [LARGE SCALE ANALYSIS] AT SER-60; SER-64; SER-107; SER-237 AND SER-240</scope>
    <scope>IDENTIFICATION BY MASS SPECTROMETRY [LARGE SCALE ANALYSIS]</scope>
    <source>
        <tissue>Brain</tissue>
        <tissue>Kidney</tissue>
    </source>
</reference>
<proteinExistence type="evidence at protein level"/>
<gene>
    <name evidence="4" type="primary">Pgcka1</name>
</gene>
<keyword id="KW-1003">Cell membrane</keyword>
<keyword id="KW-0472">Membrane</keyword>
<keyword id="KW-0597">Phosphoprotein</keyword>
<keyword id="KW-1185">Reference proteome</keyword>
<keyword id="KW-0043">Tumor suppressor</keyword>
<sequence length="313" mass="33916">MGCRCCKMIQSYLFDPVQVPSPGFVNEVNNCKLEEDDTVRLKGTQNSEVEVPRNALHDGSLSNSESRGSTTGLPHQGPLPQEDSEERPCVEKQGIVNGISPTATLQSVRSSRLHQVDNSSWASSPWVATIDSAHLAQPFLEGEDYRKQSCLLPTLEGTQMVGHGDCRAPAEALAVADHIPYIPAPDYPQLWSPTVDNADPEEKDCLFENHSEVEPLPGIQPRVSQLGLNVPFSLQRSWDSLNEAGTTEVLSDYFKEEGPTHPTPAADSGSEREDPHTYNGDREGVVVDEDAEVAEALAALEAATAGEDADDAD</sequence>
<dbReference type="EMBL" id="AK002869">
    <property type="protein sequence ID" value="BAB22418.1"/>
    <property type="molecule type" value="mRNA"/>
</dbReference>
<dbReference type="EMBL" id="AK050792">
    <property type="protein sequence ID" value="BAC34413.1"/>
    <property type="molecule type" value="mRNA"/>
</dbReference>
<dbReference type="EMBL" id="AK159779">
    <property type="protein sequence ID" value="BAE35363.1"/>
    <property type="molecule type" value="mRNA"/>
</dbReference>
<dbReference type="EMBL" id="BC004797">
    <property type="protein sequence ID" value="AAH04797.1"/>
    <property type="molecule type" value="mRNA"/>
</dbReference>
<dbReference type="CCDS" id="CCDS39092.1"/>
<dbReference type="RefSeq" id="NP_001404826.1">
    <property type="nucleotide sequence ID" value="NM_001417897.1"/>
</dbReference>
<dbReference type="RefSeq" id="NP_001404827.1">
    <property type="nucleotide sequence ID" value="NM_001417898.1"/>
</dbReference>
<dbReference type="RefSeq" id="NP_001404828.1">
    <property type="nucleotide sequence ID" value="NM_001417899.1"/>
</dbReference>
<dbReference type="RefSeq" id="NP_001404829.1">
    <property type="nucleotide sequence ID" value="NM_001417900.1"/>
</dbReference>
<dbReference type="RefSeq" id="NP_083830.3">
    <property type="nucleotide sequence ID" value="NM_029554.4"/>
</dbReference>
<dbReference type="RefSeq" id="XP_006504241.1">
    <property type="nucleotide sequence ID" value="XM_006504178.3"/>
</dbReference>
<dbReference type="RefSeq" id="XP_011239094.1">
    <property type="nucleotide sequence ID" value="XM_011240792.2"/>
</dbReference>
<dbReference type="FunCoup" id="Q99K99">
    <property type="interactions" value="16"/>
</dbReference>
<dbReference type="STRING" id="10090.ENSMUSP00000080443"/>
<dbReference type="GlyGen" id="Q99K99">
    <property type="glycosylation" value="3 sites"/>
</dbReference>
<dbReference type="iPTMnet" id="Q99K99"/>
<dbReference type="PhosphoSitePlus" id="Q99K99"/>
<dbReference type="PaxDb" id="10090-ENSMUSP00000080443"/>
<dbReference type="Antibodypedia" id="43802">
    <property type="antibodies" value="71 antibodies from 15 providers"/>
</dbReference>
<dbReference type="DNASU" id="76261"/>
<dbReference type="Ensembl" id="ENSMUST00000081747.8">
    <property type="protein sequence ID" value="ENSMUSP00000080443.4"/>
    <property type="gene ID" value="ENSMUSG00000060512.8"/>
</dbReference>
<dbReference type="GeneID" id="76261"/>
<dbReference type="KEGG" id="mmu:76261"/>
<dbReference type="UCSC" id="uc008xmg.1">
    <property type="organism name" value="mouse"/>
</dbReference>
<dbReference type="AGR" id="MGI:1923511"/>
<dbReference type="CTD" id="55286"/>
<dbReference type="MGI" id="MGI:1923511">
    <property type="gene designation" value="Pgcka1"/>
</dbReference>
<dbReference type="VEuPathDB" id="HostDB:ENSMUSG00000060512"/>
<dbReference type="eggNOG" id="ENOG502S5D9">
    <property type="taxonomic scope" value="Eukaryota"/>
</dbReference>
<dbReference type="GeneTree" id="ENSGT00390000013778"/>
<dbReference type="HOGENOM" id="CLU_076375_0_0_1"/>
<dbReference type="InParanoid" id="Q99K99"/>
<dbReference type="OMA" id="YPQLWGS"/>
<dbReference type="OrthoDB" id="8773301at2759"/>
<dbReference type="PhylomeDB" id="Q99K99"/>
<dbReference type="TreeFam" id="TF337421"/>
<dbReference type="BioGRID-ORCS" id="76261">
    <property type="hits" value="0 hits in 76 CRISPR screens"/>
</dbReference>
<dbReference type="PRO" id="PR:Q99K99"/>
<dbReference type="Proteomes" id="UP000000589">
    <property type="component" value="Chromosome 5"/>
</dbReference>
<dbReference type="RNAct" id="Q99K99">
    <property type="molecule type" value="protein"/>
</dbReference>
<dbReference type="Bgee" id="ENSMUSG00000060512">
    <property type="expression patterns" value="Expressed in dorsal pancreas and 197 other cell types or tissues"/>
</dbReference>
<dbReference type="ExpressionAtlas" id="Q99K99">
    <property type="expression patterns" value="baseline and differential"/>
</dbReference>
<dbReference type="GO" id="GO:0071944">
    <property type="term" value="C:cell periphery"/>
    <property type="evidence" value="ECO:0000250"/>
    <property type="project" value="UniProtKB"/>
</dbReference>
<dbReference type="GO" id="GO:0005886">
    <property type="term" value="C:plasma membrane"/>
    <property type="evidence" value="ECO:0007669"/>
    <property type="project" value="UniProtKB-SubCell"/>
</dbReference>
<dbReference type="GO" id="GO:0003723">
    <property type="term" value="F:RNA binding"/>
    <property type="evidence" value="ECO:0000250"/>
    <property type="project" value="UniProtKB"/>
</dbReference>
<dbReference type="GO" id="GO:0051726">
    <property type="term" value="P:regulation of cell cycle"/>
    <property type="evidence" value="ECO:0000250"/>
    <property type="project" value="UniProtKB"/>
</dbReference>
<dbReference type="InterPro" id="IPR031528">
    <property type="entry name" value="DUF4699"/>
</dbReference>
<dbReference type="PANTHER" id="PTHR16106">
    <property type="entry name" value="CHROMOSOME 4 OPEN READING FRAME 19"/>
    <property type="match status" value="1"/>
</dbReference>
<dbReference type="PANTHER" id="PTHR16106:SF3">
    <property type="entry name" value="CHROMOSOME 4 OPEN READING FRAME 19"/>
    <property type="match status" value="1"/>
</dbReference>
<dbReference type="Pfam" id="PF15770">
    <property type="entry name" value="DUF4699"/>
    <property type="match status" value="1"/>
</dbReference>
<feature type="chain" id="PRO_0000286562" description="PDCD10 and GCKIII kinases-associated protein 1">
    <location>
        <begin position="1"/>
        <end position="313"/>
    </location>
</feature>
<feature type="region of interest" description="Disordered" evidence="2">
    <location>
        <begin position="40"/>
        <end position="89"/>
    </location>
</feature>
<feature type="region of interest" description="Disordered" evidence="2">
    <location>
        <begin position="253"/>
        <end position="286"/>
    </location>
</feature>
<feature type="compositionally biased region" description="Polar residues" evidence="2">
    <location>
        <begin position="60"/>
        <end position="73"/>
    </location>
</feature>
<feature type="compositionally biased region" description="Basic and acidic residues" evidence="2">
    <location>
        <begin position="269"/>
        <end position="285"/>
    </location>
</feature>
<feature type="modified residue" description="Phosphoserine" evidence="6">
    <location>
        <position position="60"/>
    </location>
</feature>
<feature type="modified residue" description="Phosphoserine" evidence="6">
    <location>
        <position position="64"/>
    </location>
</feature>
<feature type="modified residue" description="Phosphothreonine" evidence="5">
    <location>
        <position position="104"/>
    </location>
</feature>
<feature type="modified residue" description="Phosphoserine" evidence="5 6">
    <location>
        <position position="107"/>
    </location>
</feature>
<feature type="modified residue" description="Phosphoserine" evidence="6">
    <location>
        <position position="237"/>
    </location>
</feature>
<feature type="modified residue" description="Phosphoserine" evidence="6">
    <location>
        <position position="240"/>
    </location>
</feature>
<feature type="sequence conflict" description="In Ref. 2; AAH04797." evidence="3" ref="2">
    <original>V</original>
    <variation>M</variation>
    <location>
        <position position="161"/>
    </location>
</feature>
<feature type="sequence conflict" description="In Ref. 2; AAH04797." evidence="3" ref="2">
    <original>T</original>
    <variation>A</variation>
    <location>
        <position position="194"/>
    </location>
</feature>
<feature type="sequence conflict" description="In Ref. 2; AAH04797." evidence="3" ref="2">
    <original>L</original>
    <variation>Q</variation>
    <location>
        <position position="226"/>
    </location>
</feature>
<feature type="sequence conflict" description="In Ref. 2; AAH04797." evidence="3" ref="2">
    <original>S</original>
    <variation>N</variation>
    <location>
        <position position="270"/>
    </location>
</feature>
<feature type="sequence conflict" description="In Ref. 1; BAC34413." evidence="3" ref="1">
    <original>E</original>
    <variation>D</variation>
    <location>
        <position position="271"/>
    </location>
</feature>
<feature type="sequence conflict" description="In Ref. 2; AAH04797." evidence="3" ref="2">
    <original>R</original>
    <variation>P</variation>
    <location>
        <position position="272"/>
    </location>
</feature>